<name>DNLJ_ACIB5</name>
<evidence type="ECO:0000255" key="1">
    <source>
        <dbReference type="HAMAP-Rule" id="MF_01588"/>
    </source>
</evidence>
<organism>
    <name type="scientific">Acinetobacter baumannii (strain AB0057)</name>
    <dbReference type="NCBI Taxonomy" id="480119"/>
    <lineage>
        <taxon>Bacteria</taxon>
        <taxon>Pseudomonadati</taxon>
        <taxon>Pseudomonadota</taxon>
        <taxon>Gammaproteobacteria</taxon>
        <taxon>Moraxellales</taxon>
        <taxon>Moraxellaceae</taxon>
        <taxon>Acinetobacter</taxon>
        <taxon>Acinetobacter calcoaceticus/baumannii complex</taxon>
    </lineage>
</organism>
<sequence length="678" mass="75377">MAITSVIEQMRQLIQLIAKHNHAYYVMDQPTISDSEYDHLFHQLKALEEQYPELVQADSPTTKVGGQALSKFESVTHVVPMLSLGNVFNQEDLFAFARRVEERLPNQKVQYEVELKLDGLAISLWYENGVLVRGVTRGDGETGEDITQNVKTIRNLPKVLHSEKYEIPRLLEVRGEVLMPKSGFEKLNADQEAKGEKTFANPRNAAAGSLRQLDPNIAAARPLAFYAYGIAQCEPNHGLTTMHDSLQWLTELGFQIAERQYLCNSIQEVQQRYEQIQQERPNLQVEIDGMVVKVDDLKQQQQLGFLSREPRWATAYKFPAQAALTTVEQIDWQVGRTGTLTPVARLNPVFVGGVTVSNVTLHNIGEIHRLDVRIGDTVSVYRTGDVIPKVEKVWPEFRPAEAEVVHLPESCPVCASPVVMPEGEALARCSGGLYCAAQRIEAIRHFVSRKAMDIEGLGDRWVESLLRLDLLKDVADIYHLHEHRETLLGIEKMGEKSVQNLIDAIEASKKTTLARFIYALGIRGVGETTARMLANTFQTLEALKAANVEALKKTPDVGDITAEWIADFFLAPHNIEVLDRLIAAGIHWDAPTAPTRQPLNGESWVLTGTLEQMTRDQATQMLQALGARVSGSVSSKTKCVVAGEKAGSKLEKAAKLGIPVMNETDFLSLMAGYGQTLS</sequence>
<keyword id="KW-0227">DNA damage</keyword>
<keyword id="KW-0234">DNA repair</keyword>
<keyword id="KW-0235">DNA replication</keyword>
<keyword id="KW-0436">Ligase</keyword>
<keyword id="KW-0460">Magnesium</keyword>
<keyword id="KW-0464">Manganese</keyword>
<keyword id="KW-0479">Metal-binding</keyword>
<keyword id="KW-0520">NAD</keyword>
<keyword id="KW-0862">Zinc</keyword>
<reference key="1">
    <citation type="journal article" date="2008" name="J. Bacteriol.">
        <title>Comparative genome sequence analysis of multidrug-resistant Acinetobacter baumannii.</title>
        <authorList>
            <person name="Adams M.D."/>
            <person name="Goglin K."/>
            <person name="Molyneaux N."/>
            <person name="Hujer K.M."/>
            <person name="Lavender H."/>
            <person name="Jamison J.J."/>
            <person name="MacDonald I.J."/>
            <person name="Martin K.M."/>
            <person name="Russo T."/>
            <person name="Campagnari A.A."/>
            <person name="Hujer A.M."/>
            <person name="Bonomo R.A."/>
            <person name="Gill S.R."/>
        </authorList>
    </citation>
    <scope>NUCLEOTIDE SEQUENCE [LARGE SCALE GENOMIC DNA]</scope>
    <source>
        <strain>AB0057</strain>
    </source>
</reference>
<protein>
    <recommendedName>
        <fullName evidence="1">DNA ligase</fullName>
        <ecNumber evidence="1">6.5.1.2</ecNumber>
    </recommendedName>
    <alternativeName>
        <fullName evidence="1">Polydeoxyribonucleotide synthase [NAD(+)]</fullName>
    </alternativeName>
</protein>
<proteinExistence type="inferred from homology"/>
<feature type="chain" id="PRO_0000380275" description="DNA ligase">
    <location>
        <begin position="1"/>
        <end position="678"/>
    </location>
</feature>
<feature type="domain" description="BRCT" evidence="1">
    <location>
        <begin position="594"/>
        <end position="678"/>
    </location>
</feature>
<feature type="active site" description="N6-AMP-lysine intermediate" evidence="1">
    <location>
        <position position="116"/>
    </location>
</feature>
<feature type="binding site" evidence="1">
    <location>
        <begin position="34"/>
        <end position="38"/>
    </location>
    <ligand>
        <name>NAD(+)</name>
        <dbReference type="ChEBI" id="CHEBI:57540"/>
    </ligand>
</feature>
<feature type="binding site" evidence="1">
    <location>
        <begin position="83"/>
        <end position="84"/>
    </location>
    <ligand>
        <name>NAD(+)</name>
        <dbReference type="ChEBI" id="CHEBI:57540"/>
    </ligand>
</feature>
<feature type="binding site" evidence="1">
    <location>
        <position position="114"/>
    </location>
    <ligand>
        <name>NAD(+)</name>
        <dbReference type="ChEBI" id="CHEBI:57540"/>
    </ligand>
</feature>
<feature type="binding site" evidence="1">
    <location>
        <position position="137"/>
    </location>
    <ligand>
        <name>NAD(+)</name>
        <dbReference type="ChEBI" id="CHEBI:57540"/>
    </ligand>
</feature>
<feature type="binding site" evidence="1">
    <location>
        <position position="176"/>
    </location>
    <ligand>
        <name>NAD(+)</name>
        <dbReference type="ChEBI" id="CHEBI:57540"/>
    </ligand>
</feature>
<feature type="binding site" evidence="1">
    <location>
        <position position="293"/>
    </location>
    <ligand>
        <name>NAD(+)</name>
        <dbReference type="ChEBI" id="CHEBI:57540"/>
    </ligand>
</feature>
<feature type="binding site" evidence="1">
    <location>
        <position position="317"/>
    </location>
    <ligand>
        <name>NAD(+)</name>
        <dbReference type="ChEBI" id="CHEBI:57540"/>
    </ligand>
</feature>
<feature type="binding site" evidence="1">
    <location>
        <position position="411"/>
    </location>
    <ligand>
        <name>Zn(2+)</name>
        <dbReference type="ChEBI" id="CHEBI:29105"/>
    </ligand>
</feature>
<feature type="binding site" evidence="1">
    <location>
        <position position="414"/>
    </location>
    <ligand>
        <name>Zn(2+)</name>
        <dbReference type="ChEBI" id="CHEBI:29105"/>
    </ligand>
</feature>
<feature type="binding site" evidence="1">
    <location>
        <position position="429"/>
    </location>
    <ligand>
        <name>Zn(2+)</name>
        <dbReference type="ChEBI" id="CHEBI:29105"/>
    </ligand>
</feature>
<feature type="binding site" evidence="1">
    <location>
        <position position="435"/>
    </location>
    <ligand>
        <name>Zn(2+)</name>
        <dbReference type="ChEBI" id="CHEBI:29105"/>
    </ligand>
</feature>
<accession>B7I790</accession>
<dbReference type="EC" id="6.5.1.2" evidence="1"/>
<dbReference type="EMBL" id="CP001182">
    <property type="protein sequence ID" value="ACJ40649.1"/>
    <property type="molecule type" value="Genomic_DNA"/>
</dbReference>
<dbReference type="RefSeq" id="WP_001018842.1">
    <property type="nucleotide sequence ID" value="NC_011586.2"/>
</dbReference>
<dbReference type="SMR" id="B7I790"/>
<dbReference type="KEGG" id="abn:AB57_0851"/>
<dbReference type="HOGENOM" id="CLU_007764_2_1_6"/>
<dbReference type="Proteomes" id="UP000007094">
    <property type="component" value="Chromosome"/>
</dbReference>
<dbReference type="GO" id="GO:0005829">
    <property type="term" value="C:cytosol"/>
    <property type="evidence" value="ECO:0007669"/>
    <property type="project" value="TreeGrafter"/>
</dbReference>
<dbReference type="GO" id="GO:0003677">
    <property type="term" value="F:DNA binding"/>
    <property type="evidence" value="ECO:0007669"/>
    <property type="project" value="InterPro"/>
</dbReference>
<dbReference type="GO" id="GO:0003911">
    <property type="term" value="F:DNA ligase (NAD+) activity"/>
    <property type="evidence" value="ECO:0007669"/>
    <property type="project" value="UniProtKB-UniRule"/>
</dbReference>
<dbReference type="GO" id="GO:0046872">
    <property type="term" value="F:metal ion binding"/>
    <property type="evidence" value="ECO:0007669"/>
    <property type="project" value="UniProtKB-KW"/>
</dbReference>
<dbReference type="GO" id="GO:0006281">
    <property type="term" value="P:DNA repair"/>
    <property type="evidence" value="ECO:0007669"/>
    <property type="project" value="UniProtKB-KW"/>
</dbReference>
<dbReference type="GO" id="GO:0006260">
    <property type="term" value="P:DNA replication"/>
    <property type="evidence" value="ECO:0007669"/>
    <property type="project" value="UniProtKB-KW"/>
</dbReference>
<dbReference type="CDD" id="cd17748">
    <property type="entry name" value="BRCT_DNA_ligase_like"/>
    <property type="match status" value="1"/>
</dbReference>
<dbReference type="CDD" id="cd00114">
    <property type="entry name" value="LIGANc"/>
    <property type="match status" value="1"/>
</dbReference>
<dbReference type="FunFam" id="1.10.150.20:FF:000006">
    <property type="entry name" value="DNA ligase"/>
    <property type="match status" value="1"/>
</dbReference>
<dbReference type="FunFam" id="1.10.150.20:FF:000007">
    <property type="entry name" value="DNA ligase"/>
    <property type="match status" value="1"/>
</dbReference>
<dbReference type="FunFam" id="1.10.287.610:FF:000002">
    <property type="entry name" value="DNA ligase"/>
    <property type="match status" value="1"/>
</dbReference>
<dbReference type="FunFam" id="2.40.50.140:FF:000012">
    <property type="entry name" value="DNA ligase"/>
    <property type="match status" value="1"/>
</dbReference>
<dbReference type="FunFam" id="3.30.470.30:FF:000001">
    <property type="entry name" value="DNA ligase"/>
    <property type="match status" value="1"/>
</dbReference>
<dbReference type="Gene3D" id="6.20.10.30">
    <property type="match status" value="1"/>
</dbReference>
<dbReference type="Gene3D" id="1.10.150.20">
    <property type="entry name" value="5' to 3' exonuclease, C-terminal subdomain"/>
    <property type="match status" value="2"/>
</dbReference>
<dbReference type="Gene3D" id="3.40.50.10190">
    <property type="entry name" value="BRCT domain"/>
    <property type="match status" value="1"/>
</dbReference>
<dbReference type="Gene3D" id="3.30.470.30">
    <property type="entry name" value="DNA ligase/mRNA capping enzyme"/>
    <property type="match status" value="1"/>
</dbReference>
<dbReference type="Gene3D" id="1.10.287.610">
    <property type="entry name" value="Helix hairpin bin"/>
    <property type="match status" value="1"/>
</dbReference>
<dbReference type="Gene3D" id="2.40.50.140">
    <property type="entry name" value="Nucleic acid-binding proteins"/>
    <property type="match status" value="1"/>
</dbReference>
<dbReference type="HAMAP" id="MF_01588">
    <property type="entry name" value="DNA_ligase_A"/>
    <property type="match status" value="1"/>
</dbReference>
<dbReference type="InterPro" id="IPR001357">
    <property type="entry name" value="BRCT_dom"/>
</dbReference>
<dbReference type="InterPro" id="IPR036420">
    <property type="entry name" value="BRCT_dom_sf"/>
</dbReference>
<dbReference type="InterPro" id="IPR041663">
    <property type="entry name" value="DisA/LigA_HHH"/>
</dbReference>
<dbReference type="InterPro" id="IPR001679">
    <property type="entry name" value="DNA_ligase"/>
</dbReference>
<dbReference type="InterPro" id="IPR018239">
    <property type="entry name" value="DNA_ligase_AS"/>
</dbReference>
<dbReference type="InterPro" id="IPR033136">
    <property type="entry name" value="DNA_ligase_CS"/>
</dbReference>
<dbReference type="InterPro" id="IPR013839">
    <property type="entry name" value="DNAligase_adenylation"/>
</dbReference>
<dbReference type="InterPro" id="IPR013840">
    <property type="entry name" value="DNAligase_N"/>
</dbReference>
<dbReference type="InterPro" id="IPR003583">
    <property type="entry name" value="Hlx-hairpin-Hlx_DNA-bd_motif"/>
</dbReference>
<dbReference type="InterPro" id="IPR012340">
    <property type="entry name" value="NA-bd_OB-fold"/>
</dbReference>
<dbReference type="InterPro" id="IPR004150">
    <property type="entry name" value="NAD_DNA_ligase_OB"/>
</dbReference>
<dbReference type="InterPro" id="IPR010994">
    <property type="entry name" value="RuvA_2-like"/>
</dbReference>
<dbReference type="InterPro" id="IPR004149">
    <property type="entry name" value="Znf_DNAligase_C4"/>
</dbReference>
<dbReference type="NCBIfam" id="TIGR00575">
    <property type="entry name" value="dnlj"/>
    <property type="match status" value="1"/>
</dbReference>
<dbReference type="NCBIfam" id="NF005932">
    <property type="entry name" value="PRK07956.1"/>
    <property type="match status" value="1"/>
</dbReference>
<dbReference type="PANTHER" id="PTHR23389">
    <property type="entry name" value="CHROMOSOME TRANSMISSION FIDELITY FACTOR 18"/>
    <property type="match status" value="1"/>
</dbReference>
<dbReference type="PANTHER" id="PTHR23389:SF9">
    <property type="entry name" value="DNA LIGASE"/>
    <property type="match status" value="1"/>
</dbReference>
<dbReference type="Pfam" id="PF00533">
    <property type="entry name" value="BRCT"/>
    <property type="match status" value="1"/>
</dbReference>
<dbReference type="Pfam" id="PF01653">
    <property type="entry name" value="DNA_ligase_aden"/>
    <property type="match status" value="1"/>
</dbReference>
<dbReference type="Pfam" id="PF03120">
    <property type="entry name" value="DNA_ligase_OB"/>
    <property type="match status" value="1"/>
</dbReference>
<dbReference type="Pfam" id="PF03119">
    <property type="entry name" value="DNA_ligase_ZBD"/>
    <property type="match status" value="1"/>
</dbReference>
<dbReference type="Pfam" id="PF12826">
    <property type="entry name" value="HHH_2"/>
    <property type="match status" value="1"/>
</dbReference>
<dbReference type="Pfam" id="PF22745">
    <property type="entry name" value="Nlig-Ia"/>
    <property type="match status" value="1"/>
</dbReference>
<dbReference type="PIRSF" id="PIRSF001604">
    <property type="entry name" value="LigA"/>
    <property type="match status" value="1"/>
</dbReference>
<dbReference type="SMART" id="SM00292">
    <property type="entry name" value="BRCT"/>
    <property type="match status" value="1"/>
</dbReference>
<dbReference type="SMART" id="SM00278">
    <property type="entry name" value="HhH1"/>
    <property type="match status" value="4"/>
</dbReference>
<dbReference type="SMART" id="SM00532">
    <property type="entry name" value="LIGANc"/>
    <property type="match status" value="1"/>
</dbReference>
<dbReference type="SUPFAM" id="SSF52113">
    <property type="entry name" value="BRCT domain"/>
    <property type="match status" value="1"/>
</dbReference>
<dbReference type="SUPFAM" id="SSF56091">
    <property type="entry name" value="DNA ligase/mRNA capping enzyme, catalytic domain"/>
    <property type="match status" value="1"/>
</dbReference>
<dbReference type="SUPFAM" id="SSF50249">
    <property type="entry name" value="Nucleic acid-binding proteins"/>
    <property type="match status" value="1"/>
</dbReference>
<dbReference type="SUPFAM" id="SSF47781">
    <property type="entry name" value="RuvA domain 2-like"/>
    <property type="match status" value="1"/>
</dbReference>
<dbReference type="PROSITE" id="PS50172">
    <property type="entry name" value="BRCT"/>
    <property type="match status" value="1"/>
</dbReference>
<dbReference type="PROSITE" id="PS01055">
    <property type="entry name" value="DNA_LIGASE_N1"/>
    <property type="match status" value="1"/>
</dbReference>
<dbReference type="PROSITE" id="PS01056">
    <property type="entry name" value="DNA_LIGASE_N2"/>
    <property type="match status" value="1"/>
</dbReference>
<comment type="function">
    <text evidence="1">DNA ligase that catalyzes the formation of phosphodiester linkages between 5'-phosphoryl and 3'-hydroxyl groups in double-stranded DNA using NAD as a coenzyme and as the energy source for the reaction. It is essential for DNA replication and repair of damaged DNA.</text>
</comment>
<comment type="catalytic activity">
    <reaction evidence="1">
        <text>NAD(+) + (deoxyribonucleotide)n-3'-hydroxyl + 5'-phospho-(deoxyribonucleotide)m = (deoxyribonucleotide)n+m + AMP + beta-nicotinamide D-nucleotide.</text>
        <dbReference type="EC" id="6.5.1.2"/>
    </reaction>
</comment>
<comment type="cofactor">
    <cofactor evidence="1">
        <name>Mg(2+)</name>
        <dbReference type="ChEBI" id="CHEBI:18420"/>
    </cofactor>
    <cofactor evidence="1">
        <name>Mn(2+)</name>
        <dbReference type="ChEBI" id="CHEBI:29035"/>
    </cofactor>
</comment>
<comment type="similarity">
    <text evidence="1">Belongs to the NAD-dependent DNA ligase family. LigA subfamily.</text>
</comment>
<gene>
    <name evidence="1" type="primary">ligA</name>
    <name type="ordered locus">AB57_0851</name>
</gene>